<keyword id="KW-0998">Cell outer membrane</keyword>
<keyword id="KW-0186">Copper</keyword>
<keyword id="KW-0249">Electron transport</keyword>
<keyword id="KW-0449">Lipoprotein</keyword>
<keyword id="KW-0472">Membrane</keyword>
<keyword id="KW-0479">Metal-binding</keyword>
<keyword id="KW-0564">Palmitate</keyword>
<keyword id="KW-0732">Signal</keyword>
<keyword id="KW-0813">Transport</keyword>
<protein>
    <recommendedName>
        <fullName>Outer membrane protein H.8</fullName>
    </recommendedName>
</protein>
<evidence type="ECO:0000250" key="1"/>
<evidence type="ECO:0000255" key="2">
    <source>
        <dbReference type="PROSITE-ProRule" id="PRU00303"/>
    </source>
</evidence>
<evidence type="ECO:0000256" key="3">
    <source>
        <dbReference type="SAM" id="MobiDB-lite"/>
    </source>
</evidence>
<evidence type="ECO:0000269" key="4">
    <source ref="1"/>
</evidence>
<evidence type="ECO:0000305" key="5"/>
<dbReference type="EMBL" id="X06208">
    <property type="protein sequence ID" value="CAA29561.1"/>
    <property type="molecule type" value="Genomic_DNA"/>
</dbReference>
<dbReference type="PIR" id="S06374">
    <property type="entry name" value="AZNHG"/>
</dbReference>
<dbReference type="RefSeq" id="WP_003688275.1">
    <property type="nucleotide sequence ID" value="NZ_WHPL01000002.1"/>
</dbReference>
<dbReference type="BMRB" id="P07211"/>
<dbReference type="SMR" id="P07211"/>
<dbReference type="GeneID" id="66753316"/>
<dbReference type="OMA" id="MGHNFVL"/>
<dbReference type="GO" id="GO:0009279">
    <property type="term" value="C:cell outer membrane"/>
    <property type="evidence" value="ECO:0007669"/>
    <property type="project" value="UniProtKB-SubCell"/>
</dbReference>
<dbReference type="GO" id="GO:0005507">
    <property type="term" value="F:copper ion binding"/>
    <property type="evidence" value="ECO:0007669"/>
    <property type="project" value="InterPro"/>
</dbReference>
<dbReference type="GO" id="GO:0009055">
    <property type="term" value="F:electron transfer activity"/>
    <property type="evidence" value="ECO:0007669"/>
    <property type="project" value="InterPro"/>
</dbReference>
<dbReference type="CDD" id="cd13922">
    <property type="entry name" value="Azurin"/>
    <property type="match status" value="1"/>
</dbReference>
<dbReference type="Gene3D" id="2.60.40.420">
    <property type="entry name" value="Cupredoxins - blue copper proteins"/>
    <property type="match status" value="1"/>
</dbReference>
<dbReference type="InterPro" id="IPR014068">
    <property type="entry name" value="Azurin"/>
</dbReference>
<dbReference type="InterPro" id="IPR000923">
    <property type="entry name" value="BlueCu_1"/>
</dbReference>
<dbReference type="InterPro" id="IPR028871">
    <property type="entry name" value="BlueCu_1_BS"/>
</dbReference>
<dbReference type="InterPro" id="IPR050845">
    <property type="entry name" value="Cu-binding_ET"/>
</dbReference>
<dbReference type="InterPro" id="IPR008972">
    <property type="entry name" value="Cupredoxin"/>
</dbReference>
<dbReference type="NCBIfam" id="TIGR02695">
    <property type="entry name" value="azurin"/>
    <property type="match status" value="1"/>
</dbReference>
<dbReference type="PANTHER" id="PTHR38439">
    <property type="entry name" value="AURACYANIN-B"/>
    <property type="match status" value="1"/>
</dbReference>
<dbReference type="PANTHER" id="PTHR38439:SF2">
    <property type="entry name" value="OUTER MEMBRANE PROTEIN H.8"/>
    <property type="match status" value="1"/>
</dbReference>
<dbReference type="Pfam" id="PF00127">
    <property type="entry name" value="Copper-bind"/>
    <property type="match status" value="1"/>
</dbReference>
<dbReference type="SUPFAM" id="SSF49503">
    <property type="entry name" value="Cupredoxins"/>
    <property type="match status" value="1"/>
</dbReference>
<dbReference type="PROSITE" id="PS00196">
    <property type="entry name" value="COPPER_BLUE"/>
    <property type="match status" value="1"/>
</dbReference>
<dbReference type="PROSITE" id="PS51257">
    <property type="entry name" value="PROKAR_LIPOPROTEIN"/>
    <property type="match status" value="1"/>
</dbReference>
<organism>
    <name type="scientific">Neisseria gonorrhoeae</name>
    <dbReference type="NCBI Taxonomy" id="485"/>
    <lineage>
        <taxon>Bacteria</taxon>
        <taxon>Pseudomonadati</taxon>
        <taxon>Pseudomonadota</taxon>
        <taxon>Betaproteobacteria</taxon>
        <taxon>Neisseriales</taxon>
        <taxon>Neisseriaceae</taxon>
        <taxon>Neisseria</taxon>
    </lineage>
</organism>
<reference key="1">
    <citation type="journal article" date="1987" name="FEMS Microbiol. Lett.">
        <title>Identification and gene structure of an azurin-like protein with a lipoprotein signal peptide in Neisseria gonorrhoeae.</title>
        <authorList>
            <person name="Godschlich E.C."/>
            <person name="Seiff M.E."/>
        </authorList>
    </citation>
    <scope>NUCLEOTIDE SEQUENCE [GENOMIC DNA]</scope>
    <scope>DIACYLGLYCEROL AT CYS-18</scope>
    <source>
        <strain>R10</strain>
    </source>
</reference>
<proteinExistence type="evidence at protein level"/>
<feature type="signal peptide">
    <location>
        <begin position="1"/>
        <end position="17"/>
    </location>
</feature>
<feature type="chain" id="PRO_0000002853" description="Outer membrane protein H.8">
    <location>
        <begin position="18"/>
        <end position="183"/>
    </location>
</feature>
<feature type="domain" description="Plastocyanin-like">
    <location>
        <begin position="57"/>
        <end position="183"/>
    </location>
</feature>
<feature type="region of interest" description="Disordered" evidence="3">
    <location>
        <begin position="27"/>
        <end position="51"/>
    </location>
</feature>
<feature type="binding site" evidence="1">
    <location>
        <position position="102"/>
    </location>
    <ligand>
        <name>Cu cation</name>
        <dbReference type="ChEBI" id="CHEBI:23378"/>
    </ligand>
</feature>
<feature type="binding site" evidence="1">
    <location>
        <position position="166"/>
    </location>
    <ligand>
        <name>Cu cation</name>
        <dbReference type="ChEBI" id="CHEBI:23378"/>
    </ligand>
</feature>
<feature type="binding site" evidence="1">
    <location>
        <position position="171"/>
    </location>
    <ligand>
        <name>Cu cation</name>
        <dbReference type="ChEBI" id="CHEBI:23378"/>
    </ligand>
</feature>
<feature type="binding site" evidence="1">
    <location>
        <position position="175"/>
    </location>
    <ligand>
        <name>Cu cation</name>
        <dbReference type="ChEBI" id="CHEBI:23378"/>
    </ligand>
</feature>
<feature type="lipid moiety-binding region" description="N-palmitoyl cysteine" evidence="5">
    <location>
        <position position="18"/>
    </location>
</feature>
<feature type="lipid moiety-binding region" description="S-diacylglycerol cysteine" evidence="2 4">
    <location>
        <position position="18"/>
    </location>
</feature>
<accession>P07211</accession>
<comment type="cofactor">
    <cofactor evidence="1">
        <name>Cu cation</name>
        <dbReference type="ChEBI" id="CHEBI:23378"/>
    </cofactor>
    <text evidence="1">Binds 1 copper ion per subunit.</text>
</comment>
<comment type="subcellular location">
    <subcellularLocation>
        <location>Cell outer membrane</location>
        <topology>Lipid-anchor</topology>
    </subcellularLocation>
</comment>
<sequence length="183" mass="18532">MKAYLALISAAVIGLAACSQEPAAPAAEATPAGEAPASEAPAAEAAPADAAEAPAAGNCAATVESNDNMQFNTKDIQVSKACKEFTITLKHTGTQPKASMGHNLVIAKAEDMDGVFKDGVGAADTDYVKPDDARVVAHTKLIGGGEESSLTLDPAKLADGDYKFACTFPGHGALMNGKVTLVD</sequence>
<name>H81_NEIGO</name>